<name>NU4C_CALFG</name>
<sequence>MSYFPWLTVIVVLPISAGSSIFFVPYRGNKNKVIRWYTICICLLEILLTTYAFCYHFQSDDPLIQLEEAYKWIHIFDFHWRPGIDGLSIGPILLTGFITTLATLAARPVTRDSRLFHFLMLAMYSGQVGSFSSRDLLLFFLMWELELIPVYLLLSMWGGKKRMYSATKFILYTAGGSIFLLMGVSGMGLYGSNEPTLNFETLANQSYPLGLEIIFYFGFLIAYAVKSPIIPLHTWLPDTHGEAHYSTCMLLAGILLKMGAYGLVRINMELLPHAHSIFSPWLVIVGAIQIIYAASTSFGQRNFKKRIAYSSVSHMGFTLIGIGSITDTGLNGAILQIISHGFIGAALFFLAGTSYDRIRLVYLDEMGGIAIPMPKIFTMFSSFSMASLALPGMSGFVAELVVFFGIITSSKYLLMPKIVISFVMAIGMILTPIYSLSMLRRMFYGYKLFNVPDFYFLDSGPRELFVSICIFLPVVGIGIYPDFVLSLSVDRVEAILSNYFHK</sequence>
<evidence type="ECO:0000255" key="1">
    <source>
        <dbReference type="HAMAP-Rule" id="MF_00491"/>
    </source>
</evidence>
<feature type="chain" id="PRO_0000118012" description="NAD(P)H-quinone oxidoreductase chain 4, chloroplastic">
    <location>
        <begin position="1"/>
        <end position="502"/>
    </location>
</feature>
<feature type="transmembrane region" description="Helical" evidence="1">
    <location>
        <begin position="4"/>
        <end position="24"/>
    </location>
</feature>
<feature type="transmembrane region" description="Helical" evidence="1">
    <location>
        <begin position="37"/>
        <end position="57"/>
    </location>
</feature>
<feature type="transmembrane region" description="Helical" evidence="1">
    <location>
        <begin position="86"/>
        <end position="106"/>
    </location>
</feature>
<feature type="transmembrane region" description="Helical" evidence="1">
    <location>
        <begin position="113"/>
        <end position="131"/>
    </location>
</feature>
<feature type="transmembrane region" description="Helical" evidence="1">
    <location>
        <begin position="136"/>
        <end position="156"/>
    </location>
</feature>
<feature type="transmembrane region" description="Helical" evidence="1">
    <location>
        <begin position="169"/>
        <end position="189"/>
    </location>
</feature>
<feature type="transmembrane region" description="Helical" evidence="1">
    <location>
        <begin position="210"/>
        <end position="230"/>
    </location>
</feature>
<feature type="transmembrane region" description="Helical" evidence="1">
    <location>
        <begin position="244"/>
        <end position="264"/>
    </location>
</feature>
<feature type="transmembrane region" description="Helical" evidence="1">
    <location>
        <begin position="274"/>
        <end position="294"/>
    </location>
</feature>
<feature type="transmembrane region" description="Helical" evidence="1">
    <location>
        <begin position="307"/>
        <end position="327"/>
    </location>
</feature>
<feature type="transmembrane region" description="Helical" evidence="1">
    <location>
        <begin position="332"/>
        <end position="352"/>
    </location>
</feature>
<feature type="transmembrane region" description="Helical" evidence="1">
    <location>
        <begin position="388"/>
        <end position="408"/>
    </location>
</feature>
<feature type="transmembrane region" description="Helical" evidence="1">
    <location>
        <begin position="418"/>
        <end position="438"/>
    </location>
</feature>
<feature type="transmembrane region" description="Helical" evidence="1">
    <location>
        <begin position="464"/>
        <end position="484"/>
    </location>
</feature>
<proteinExistence type="inferred from homology"/>
<organism>
    <name type="scientific">Calycanthus floridus var. glaucus</name>
    <name type="common">Eastern sweetshrub</name>
    <name type="synonym">Calycanthus fertilis var. ferax</name>
    <dbReference type="NCBI Taxonomy" id="212734"/>
    <lineage>
        <taxon>Eukaryota</taxon>
        <taxon>Viridiplantae</taxon>
        <taxon>Streptophyta</taxon>
        <taxon>Embryophyta</taxon>
        <taxon>Tracheophyta</taxon>
        <taxon>Spermatophyta</taxon>
        <taxon>Magnoliopsida</taxon>
        <taxon>Magnoliidae</taxon>
        <taxon>Laurales</taxon>
        <taxon>Calycanthaceae</taxon>
        <taxon>Calycanthus</taxon>
    </lineage>
</organism>
<comment type="catalytic activity">
    <reaction evidence="1">
        <text>a plastoquinone + NADH + (n+1) H(+)(in) = a plastoquinol + NAD(+) + n H(+)(out)</text>
        <dbReference type="Rhea" id="RHEA:42608"/>
        <dbReference type="Rhea" id="RHEA-COMP:9561"/>
        <dbReference type="Rhea" id="RHEA-COMP:9562"/>
        <dbReference type="ChEBI" id="CHEBI:15378"/>
        <dbReference type="ChEBI" id="CHEBI:17757"/>
        <dbReference type="ChEBI" id="CHEBI:57540"/>
        <dbReference type="ChEBI" id="CHEBI:57945"/>
        <dbReference type="ChEBI" id="CHEBI:62192"/>
    </reaction>
</comment>
<comment type="catalytic activity">
    <reaction evidence="1">
        <text>a plastoquinone + NADPH + (n+1) H(+)(in) = a plastoquinol + NADP(+) + n H(+)(out)</text>
        <dbReference type="Rhea" id="RHEA:42612"/>
        <dbReference type="Rhea" id="RHEA-COMP:9561"/>
        <dbReference type="Rhea" id="RHEA-COMP:9562"/>
        <dbReference type="ChEBI" id="CHEBI:15378"/>
        <dbReference type="ChEBI" id="CHEBI:17757"/>
        <dbReference type="ChEBI" id="CHEBI:57783"/>
        <dbReference type="ChEBI" id="CHEBI:58349"/>
        <dbReference type="ChEBI" id="CHEBI:62192"/>
    </reaction>
</comment>
<comment type="subcellular location">
    <subcellularLocation>
        <location evidence="1">Plastid</location>
        <location evidence="1">Chloroplast thylakoid membrane</location>
        <topology evidence="1">Multi-pass membrane protein</topology>
    </subcellularLocation>
</comment>
<comment type="similarity">
    <text evidence="1">Belongs to the complex I subunit 4 family.</text>
</comment>
<dbReference type="EC" id="7.1.1.-" evidence="1"/>
<dbReference type="EMBL" id="AJ428413">
    <property type="protein sequence ID" value="CAD28772.1"/>
    <property type="molecule type" value="Genomic_DNA"/>
</dbReference>
<dbReference type="RefSeq" id="NP_862805.1">
    <property type="nucleotide sequence ID" value="NC_004993.1"/>
</dbReference>
<dbReference type="SMR" id="Q7YJT3"/>
<dbReference type="GeneID" id="2597988"/>
<dbReference type="GO" id="GO:0009535">
    <property type="term" value="C:chloroplast thylakoid membrane"/>
    <property type="evidence" value="ECO:0007669"/>
    <property type="project" value="UniProtKB-SubCell"/>
</dbReference>
<dbReference type="GO" id="GO:0008137">
    <property type="term" value="F:NADH dehydrogenase (ubiquinone) activity"/>
    <property type="evidence" value="ECO:0007669"/>
    <property type="project" value="InterPro"/>
</dbReference>
<dbReference type="GO" id="GO:0048039">
    <property type="term" value="F:ubiquinone binding"/>
    <property type="evidence" value="ECO:0007669"/>
    <property type="project" value="TreeGrafter"/>
</dbReference>
<dbReference type="GO" id="GO:0042773">
    <property type="term" value="P:ATP synthesis coupled electron transport"/>
    <property type="evidence" value="ECO:0007669"/>
    <property type="project" value="InterPro"/>
</dbReference>
<dbReference type="GO" id="GO:0015990">
    <property type="term" value="P:electron transport coupled proton transport"/>
    <property type="evidence" value="ECO:0007669"/>
    <property type="project" value="TreeGrafter"/>
</dbReference>
<dbReference type="HAMAP" id="MF_00491">
    <property type="entry name" value="NDH1_NuoM"/>
    <property type="match status" value="1"/>
</dbReference>
<dbReference type="InterPro" id="IPR022997">
    <property type="entry name" value="NADH_Q_OxRdtase_chain4"/>
</dbReference>
<dbReference type="InterPro" id="IPR010227">
    <property type="entry name" value="NADH_Q_OxRdtase_chainM/4"/>
</dbReference>
<dbReference type="InterPro" id="IPR003918">
    <property type="entry name" value="NADH_UbQ_OxRdtase"/>
</dbReference>
<dbReference type="InterPro" id="IPR001750">
    <property type="entry name" value="ND/Mrp_TM"/>
</dbReference>
<dbReference type="NCBIfam" id="TIGR01972">
    <property type="entry name" value="NDH_I_M"/>
    <property type="match status" value="1"/>
</dbReference>
<dbReference type="PANTHER" id="PTHR43507:SF21">
    <property type="entry name" value="NAD(P)H-QUINONE OXIDOREDUCTASE CHAIN 4, CHLOROPLASTIC"/>
    <property type="match status" value="1"/>
</dbReference>
<dbReference type="PANTHER" id="PTHR43507">
    <property type="entry name" value="NADH-UBIQUINONE OXIDOREDUCTASE CHAIN 4"/>
    <property type="match status" value="1"/>
</dbReference>
<dbReference type="Pfam" id="PF00361">
    <property type="entry name" value="Proton_antipo_M"/>
    <property type="match status" value="1"/>
</dbReference>
<dbReference type="PRINTS" id="PR01437">
    <property type="entry name" value="NUOXDRDTASE4"/>
</dbReference>
<reference key="1">
    <citation type="journal article" date="2003" name="Plant Syst. Evol.">
        <title>The chloroplast genome of the 'basal' angiosperm Calycanthus fertilis -- structural and phylogenetic analyses.</title>
        <authorList>
            <person name="Goremykin V."/>
            <person name="Hirsch-Ernst K.I."/>
            <person name="Woelfl S."/>
            <person name="Hellwig F.H."/>
        </authorList>
    </citation>
    <scope>NUCLEOTIDE SEQUENCE [LARGE SCALE GENOMIC DNA]</scope>
</reference>
<keyword id="KW-0150">Chloroplast</keyword>
<keyword id="KW-0472">Membrane</keyword>
<keyword id="KW-0520">NAD</keyword>
<keyword id="KW-0521">NADP</keyword>
<keyword id="KW-0934">Plastid</keyword>
<keyword id="KW-0618">Plastoquinone</keyword>
<keyword id="KW-0874">Quinone</keyword>
<keyword id="KW-0793">Thylakoid</keyword>
<keyword id="KW-1278">Translocase</keyword>
<keyword id="KW-0812">Transmembrane</keyword>
<keyword id="KW-1133">Transmembrane helix</keyword>
<geneLocation type="chloroplast"/>
<accession>Q7YJT3</accession>
<protein>
    <recommendedName>
        <fullName evidence="1">NAD(P)H-quinone oxidoreductase chain 4, chloroplastic</fullName>
        <ecNumber evidence="1">7.1.1.-</ecNumber>
    </recommendedName>
    <alternativeName>
        <fullName evidence="1">NAD(P)H dehydrogenase, chain 4</fullName>
    </alternativeName>
    <alternativeName>
        <fullName evidence="1">NADH-plastoquinone oxidoreductase chain 4</fullName>
    </alternativeName>
</protein>
<gene>
    <name evidence="1" type="primary">ndhD</name>
</gene>